<dbReference type="PIR" id="A00265">
    <property type="entry name" value="IHKREG"/>
</dbReference>
<dbReference type="SMR" id="P00262"/>
<dbReference type="GO" id="GO:0042597">
    <property type="term" value="C:periplasmic space"/>
    <property type="evidence" value="ECO:0007669"/>
    <property type="project" value="UniProtKB-SubCell"/>
</dbReference>
<dbReference type="GO" id="GO:0051539">
    <property type="term" value="F:4 iron, 4 sulfur cluster binding"/>
    <property type="evidence" value="ECO:0007669"/>
    <property type="project" value="UniProtKB-KW"/>
</dbReference>
<dbReference type="GO" id="GO:0009055">
    <property type="term" value="F:electron transfer activity"/>
    <property type="evidence" value="ECO:0007669"/>
    <property type="project" value="InterPro"/>
</dbReference>
<dbReference type="GO" id="GO:0046872">
    <property type="term" value="F:metal ion binding"/>
    <property type="evidence" value="ECO:0007669"/>
    <property type="project" value="UniProtKB-KW"/>
</dbReference>
<dbReference type="GO" id="GO:0019646">
    <property type="term" value="P:aerobic electron transport chain"/>
    <property type="evidence" value="ECO:0007669"/>
    <property type="project" value="InterPro"/>
</dbReference>
<dbReference type="Gene3D" id="4.10.490.10">
    <property type="entry name" value="High potential iron-sulphur protein"/>
    <property type="match status" value="1"/>
</dbReference>
<dbReference type="InterPro" id="IPR000170">
    <property type="entry name" value="High_potential_FeS_prot"/>
</dbReference>
<dbReference type="InterPro" id="IPR036369">
    <property type="entry name" value="HIPIP_sf"/>
</dbReference>
<dbReference type="Pfam" id="PF01355">
    <property type="entry name" value="HIPIP"/>
    <property type="match status" value="1"/>
</dbReference>
<dbReference type="SUPFAM" id="SSF57652">
    <property type="entry name" value="HIPIP (high potential iron protein)"/>
    <property type="match status" value="1"/>
</dbReference>
<dbReference type="PROSITE" id="PS51373">
    <property type="entry name" value="HIPIP"/>
    <property type="match status" value="1"/>
</dbReference>
<comment type="function">
    <text>Specific class of high-redox-potential 4Fe-4S ferredoxins. Functions in anaerobic electron transport in most purple and in some other photosynthetic bacteria and in at least one genus (Paracoccus) of halophilic, denitrifying bacteria.</text>
</comment>
<comment type="subunit">
    <text evidence="2">Homodimer.</text>
</comment>
<comment type="subcellular location">
    <subcellularLocation>
        <location>Periplasm</location>
    </subcellularLocation>
</comment>
<comment type="similarity">
    <text evidence="1">Belongs to the high-potential iron-sulfur protein (HiPIP) family.</text>
</comment>
<accession>P00262</accession>
<gene>
    <name type="primary">hip</name>
</gene>
<sequence length="83" mass="9052">EVPANAVTESDPTAVALKYHRNAEASERVAAARPGLPPEEQHCENCQFMLPDQGADEWRGCSLFPGKLINLDGWCASWTLRAG</sequence>
<evidence type="ECO:0000255" key="1">
    <source>
        <dbReference type="PROSITE-ProRule" id="PRU00705"/>
    </source>
</evidence>
<evidence type="ECO:0000305" key="2"/>
<feature type="chain" id="PRO_0000220415" description="High-potential iron-sulfur protein">
    <location>
        <begin position="1"/>
        <end position="83"/>
    </location>
</feature>
<feature type="binding site" evidence="1">
    <location>
        <position position="43"/>
    </location>
    <ligand>
        <name>[4Fe-4S] cluster</name>
        <dbReference type="ChEBI" id="CHEBI:49883"/>
    </ligand>
</feature>
<feature type="binding site" evidence="1">
    <location>
        <position position="46"/>
    </location>
    <ligand>
        <name>[4Fe-4S] cluster</name>
        <dbReference type="ChEBI" id="CHEBI:49883"/>
    </ligand>
</feature>
<feature type="binding site" evidence="1">
    <location>
        <position position="61"/>
    </location>
    <ligand>
        <name>[4Fe-4S] cluster</name>
        <dbReference type="ChEBI" id="CHEBI:49883"/>
    </ligand>
</feature>
<feature type="binding site" evidence="1">
    <location>
        <position position="75"/>
    </location>
    <ligand>
        <name>[4Fe-4S] cluster</name>
        <dbReference type="ChEBI" id="CHEBI:49883"/>
    </ligand>
</feature>
<proteinExistence type="evidence at protein level"/>
<reference key="1">
    <citation type="journal article" date="1981" name="J. Biol. Chem.">
        <title>Primary structures of high potential, four-iron-sulfur ferredoxins from the purple sulfur photosynthetic bacteria, Thiocapsa roseopersicina and Chromatium gracile.</title>
        <authorList>
            <person name="Tedro S.M."/>
            <person name="Meyer T.E."/>
            <person name="Bartsch R.G."/>
            <person name="Kamen M.D."/>
        </authorList>
    </citation>
    <scope>PROTEIN SEQUENCE</scope>
</reference>
<protein>
    <recommendedName>
        <fullName>High-potential iron-sulfur protein</fullName>
        <shortName>HiPIP</shortName>
    </recommendedName>
</protein>
<name>HIP_MARGR</name>
<organism>
    <name type="scientific">Marichromatium gracile</name>
    <name type="common">Chromatium gracile</name>
    <dbReference type="NCBI Taxonomy" id="1048"/>
    <lineage>
        <taxon>Bacteria</taxon>
        <taxon>Pseudomonadati</taxon>
        <taxon>Pseudomonadota</taxon>
        <taxon>Gammaproteobacteria</taxon>
        <taxon>Chromatiales</taxon>
        <taxon>Chromatiaceae</taxon>
        <taxon>Marichromatium</taxon>
    </lineage>
</organism>
<keyword id="KW-0004">4Fe-4S</keyword>
<keyword id="KW-0903">Direct protein sequencing</keyword>
<keyword id="KW-0249">Electron transport</keyword>
<keyword id="KW-0408">Iron</keyword>
<keyword id="KW-0411">Iron-sulfur</keyword>
<keyword id="KW-0479">Metal-binding</keyword>
<keyword id="KW-0574">Periplasm</keyword>
<keyword id="KW-0813">Transport</keyword>